<reference key="1">
    <citation type="submission" date="2007-05" db="EMBL/GenBank/DDBJ databases">
        <title>Complete sequence of Dehalococcoides sp. BAV1.</title>
        <authorList>
            <consortium name="US DOE Joint Genome Institute"/>
            <person name="Copeland A."/>
            <person name="Lucas S."/>
            <person name="Lapidus A."/>
            <person name="Barry K."/>
            <person name="Detter J.C."/>
            <person name="Glavina del Rio T."/>
            <person name="Hammon N."/>
            <person name="Israni S."/>
            <person name="Pitluck S."/>
            <person name="Lowry S."/>
            <person name="Clum A."/>
            <person name="Schmutz J."/>
            <person name="Larimer F."/>
            <person name="Land M."/>
            <person name="Hauser L."/>
            <person name="Kyrpides N."/>
            <person name="Kim E."/>
            <person name="Ritalahti K.M."/>
            <person name="Loeffler F."/>
            <person name="Richardson P."/>
        </authorList>
    </citation>
    <scope>NUCLEOTIDE SEQUENCE [LARGE SCALE GENOMIC DNA]</scope>
    <source>
        <strain>ATCC BAA-2100 / JCM 16839 / KCTC 5957 / BAV1</strain>
    </source>
</reference>
<comment type="function">
    <text evidence="1">Poorly processive, error-prone DNA polymerase involved in untargeted mutagenesis. Copies undamaged DNA at stalled replication forks, which arise in vivo from mismatched or misaligned primer ends. These misaligned primers can be extended by PolIV. Exhibits no 3'-5' exonuclease (proofreading) activity. May be involved in translesional synthesis, in conjunction with the beta clamp from PolIII.</text>
</comment>
<comment type="catalytic activity">
    <reaction evidence="1">
        <text>DNA(n) + a 2'-deoxyribonucleoside 5'-triphosphate = DNA(n+1) + diphosphate</text>
        <dbReference type="Rhea" id="RHEA:22508"/>
        <dbReference type="Rhea" id="RHEA-COMP:17339"/>
        <dbReference type="Rhea" id="RHEA-COMP:17340"/>
        <dbReference type="ChEBI" id="CHEBI:33019"/>
        <dbReference type="ChEBI" id="CHEBI:61560"/>
        <dbReference type="ChEBI" id="CHEBI:173112"/>
        <dbReference type="EC" id="2.7.7.7"/>
    </reaction>
</comment>
<comment type="cofactor">
    <cofactor evidence="1">
        <name>Mg(2+)</name>
        <dbReference type="ChEBI" id="CHEBI:18420"/>
    </cofactor>
    <text evidence="1">Binds 2 magnesium ions per subunit.</text>
</comment>
<comment type="subunit">
    <text evidence="1">Monomer.</text>
</comment>
<comment type="subcellular location">
    <subcellularLocation>
        <location evidence="1">Cytoplasm</location>
    </subcellularLocation>
</comment>
<comment type="similarity">
    <text evidence="1">Belongs to the DNA polymerase type-Y family.</text>
</comment>
<feature type="chain" id="PRO_1000137128" description="DNA polymerase IV">
    <location>
        <begin position="1"/>
        <end position="390"/>
    </location>
</feature>
<feature type="domain" description="UmuC" evidence="1">
    <location>
        <begin position="6"/>
        <end position="187"/>
    </location>
</feature>
<feature type="active site" evidence="1">
    <location>
        <position position="106"/>
    </location>
</feature>
<feature type="binding site" evidence="1">
    <location>
        <position position="10"/>
    </location>
    <ligand>
        <name>Mg(2+)</name>
        <dbReference type="ChEBI" id="CHEBI:18420"/>
    </ligand>
</feature>
<feature type="binding site" evidence="1">
    <location>
        <position position="105"/>
    </location>
    <ligand>
        <name>Mg(2+)</name>
        <dbReference type="ChEBI" id="CHEBI:18420"/>
    </ligand>
</feature>
<feature type="site" description="Substrate discrimination" evidence="1">
    <location>
        <position position="15"/>
    </location>
</feature>
<protein>
    <recommendedName>
        <fullName evidence="1">DNA polymerase IV</fullName>
        <shortName evidence="1">Pol IV</shortName>
        <ecNumber evidence="1">2.7.7.7</ecNumber>
    </recommendedName>
</protein>
<sequence>MSIRRVMHVDLDAFFVSVEQAVRPEFKDKPVIVGGKPERRGVVAAASYEARKFGIHSGMPLITAKHLCPQAIFIEGNHQLYREYSEKFMLILSDFSPFLEPMGLDEAYLEVTGFESLHGSIAQMASKIRRRITAELGINASIGIANSKVAAKIATEQAKPNGQCEVPAGEEASFLAPLDIAVMPGIGKKTEQHLKSLGIDTLGKLAALPASFLKSCLGTYAPYLSNAAMGIDNRPVEMPSEAKSISRETTFETDTRNQTFLEAKLSYLSEKITATLRKRGKQTRVVQIKIRFADFTTLTRQKHLGQPASGNREIFQTALSLMNGILDSDRQAVRLLGVGISDFCGPEKQLEIDPAKARLEKLDASLDKIRQKYGFSSVQTGRTYRLKDMF</sequence>
<dbReference type="EC" id="2.7.7.7" evidence="1"/>
<dbReference type="EMBL" id="CP000688">
    <property type="protein sequence ID" value="ABQ16602.1"/>
    <property type="molecule type" value="Genomic_DNA"/>
</dbReference>
<dbReference type="SMR" id="A5FSS1"/>
<dbReference type="KEGG" id="deb:DehaBAV1_0010"/>
<dbReference type="PATRIC" id="fig|216389.18.peg.10"/>
<dbReference type="HOGENOM" id="CLU_012348_1_2_0"/>
<dbReference type="GO" id="GO:0005829">
    <property type="term" value="C:cytosol"/>
    <property type="evidence" value="ECO:0007669"/>
    <property type="project" value="TreeGrafter"/>
</dbReference>
<dbReference type="GO" id="GO:0003684">
    <property type="term" value="F:damaged DNA binding"/>
    <property type="evidence" value="ECO:0007669"/>
    <property type="project" value="InterPro"/>
</dbReference>
<dbReference type="GO" id="GO:0003887">
    <property type="term" value="F:DNA-directed DNA polymerase activity"/>
    <property type="evidence" value="ECO:0007669"/>
    <property type="project" value="UniProtKB-UniRule"/>
</dbReference>
<dbReference type="GO" id="GO:0000287">
    <property type="term" value="F:magnesium ion binding"/>
    <property type="evidence" value="ECO:0007669"/>
    <property type="project" value="UniProtKB-UniRule"/>
</dbReference>
<dbReference type="GO" id="GO:0006261">
    <property type="term" value="P:DNA-templated DNA replication"/>
    <property type="evidence" value="ECO:0007669"/>
    <property type="project" value="UniProtKB-UniRule"/>
</dbReference>
<dbReference type="GO" id="GO:0042276">
    <property type="term" value="P:error-prone translesion synthesis"/>
    <property type="evidence" value="ECO:0007669"/>
    <property type="project" value="TreeGrafter"/>
</dbReference>
<dbReference type="GO" id="GO:0009432">
    <property type="term" value="P:SOS response"/>
    <property type="evidence" value="ECO:0007669"/>
    <property type="project" value="TreeGrafter"/>
</dbReference>
<dbReference type="CDD" id="cd03586">
    <property type="entry name" value="PolY_Pol_IV_kappa"/>
    <property type="match status" value="1"/>
</dbReference>
<dbReference type="FunFam" id="3.30.1490.100:FF:000016">
    <property type="entry name" value="DNA polymerase IV"/>
    <property type="match status" value="1"/>
</dbReference>
<dbReference type="FunFam" id="3.40.1170.60:FF:000001">
    <property type="entry name" value="DNA polymerase IV"/>
    <property type="match status" value="1"/>
</dbReference>
<dbReference type="Gene3D" id="3.30.70.270">
    <property type="match status" value="1"/>
</dbReference>
<dbReference type="Gene3D" id="3.40.1170.60">
    <property type="match status" value="1"/>
</dbReference>
<dbReference type="Gene3D" id="1.10.150.20">
    <property type="entry name" value="5' to 3' exonuclease, C-terminal subdomain"/>
    <property type="match status" value="1"/>
</dbReference>
<dbReference type="Gene3D" id="3.30.1490.100">
    <property type="entry name" value="DNA polymerase, Y-family, little finger domain"/>
    <property type="match status" value="1"/>
</dbReference>
<dbReference type="HAMAP" id="MF_01113">
    <property type="entry name" value="DNApol_IV"/>
    <property type="match status" value="1"/>
</dbReference>
<dbReference type="InterPro" id="IPR043502">
    <property type="entry name" value="DNA/RNA_pol_sf"/>
</dbReference>
<dbReference type="InterPro" id="IPR036775">
    <property type="entry name" value="DNA_pol_Y-fam_lit_finger_sf"/>
</dbReference>
<dbReference type="InterPro" id="IPR017961">
    <property type="entry name" value="DNA_pol_Y-fam_little_finger"/>
</dbReference>
<dbReference type="InterPro" id="IPR050116">
    <property type="entry name" value="DNA_polymerase-Y"/>
</dbReference>
<dbReference type="InterPro" id="IPR022880">
    <property type="entry name" value="DNApol_IV"/>
</dbReference>
<dbReference type="InterPro" id="IPR024728">
    <property type="entry name" value="PolY_HhH_motif"/>
</dbReference>
<dbReference type="InterPro" id="IPR043128">
    <property type="entry name" value="Rev_trsase/Diguanyl_cyclase"/>
</dbReference>
<dbReference type="InterPro" id="IPR001126">
    <property type="entry name" value="UmuC"/>
</dbReference>
<dbReference type="NCBIfam" id="NF002677">
    <property type="entry name" value="PRK02406.1"/>
    <property type="match status" value="1"/>
</dbReference>
<dbReference type="PANTHER" id="PTHR11076:SF33">
    <property type="entry name" value="DNA POLYMERASE KAPPA"/>
    <property type="match status" value="1"/>
</dbReference>
<dbReference type="PANTHER" id="PTHR11076">
    <property type="entry name" value="DNA REPAIR POLYMERASE UMUC / TRANSFERASE FAMILY MEMBER"/>
    <property type="match status" value="1"/>
</dbReference>
<dbReference type="Pfam" id="PF00817">
    <property type="entry name" value="IMS"/>
    <property type="match status" value="1"/>
</dbReference>
<dbReference type="Pfam" id="PF11799">
    <property type="entry name" value="IMS_C"/>
    <property type="match status" value="1"/>
</dbReference>
<dbReference type="Pfam" id="PF11798">
    <property type="entry name" value="IMS_HHH"/>
    <property type="match status" value="1"/>
</dbReference>
<dbReference type="SUPFAM" id="SSF56672">
    <property type="entry name" value="DNA/RNA polymerases"/>
    <property type="match status" value="1"/>
</dbReference>
<dbReference type="SUPFAM" id="SSF100879">
    <property type="entry name" value="Lesion bypass DNA polymerase (Y-family), little finger domain"/>
    <property type="match status" value="1"/>
</dbReference>
<dbReference type="PROSITE" id="PS50173">
    <property type="entry name" value="UMUC"/>
    <property type="match status" value="1"/>
</dbReference>
<organism>
    <name type="scientific">Dehalococcoides mccartyi (strain ATCC BAA-2100 / JCM 16839 / KCTC 5957 / BAV1)</name>
    <dbReference type="NCBI Taxonomy" id="216389"/>
    <lineage>
        <taxon>Bacteria</taxon>
        <taxon>Bacillati</taxon>
        <taxon>Chloroflexota</taxon>
        <taxon>Dehalococcoidia</taxon>
        <taxon>Dehalococcoidales</taxon>
        <taxon>Dehalococcoidaceae</taxon>
        <taxon>Dehalococcoides</taxon>
    </lineage>
</organism>
<name>DPO4_DEHMB</name>
<keyword id="KW-0963">Cytoplasm</keyword>
<keyword id="KW-0227">DNA damage</keyword>
<keyword id="KW-0234">DNA repair</keyword>
<keyword id="KW-0235">DNA replication</keyword>
<keyword id="KW-0238">DNA-binding</keyword>
<keyword id="KW-0239">DNA-directed DNA polymerase</keyword>
<keyword id="KW-0460">Magnesium</keyword>
<keyword id="KW-0479">Metal-binding</keyword>
<keyword id="KW-0515">Mutator protein</keyword>
<keyword id="KW-0548">Nucleotidyltransferase</keyword>
<keyword id="KW-0808">Transferase</keyword>
<proteinExistence type="inferred from homology"/>
<accession>A5FSS1</accession>
<gene>
    <name evidence="1" type="primary">dinB</name>
    <name type="ordered locus">DehaBAV1_0010</name>
</gene>
<evidence type="ECO:0000255" key="1">
    <source>
        <dbReference type="HAMAP-Rule" id="MF_01113"/>
    </source>
</evidence>